<keyword id="KW-1185">Reference proteome</keyword>
<protein>
    <recommendedName>
        <fullName>Protein FAM78A</fullName>
    </recommendedName>
</protein>
<proteinExistence type="evidence at protein level"/>
<evidence type="ECO:0000305" key="1"/>
<sequence length="283" mass="32068">MPCYFWDCWPSLEIRAVLCAMGCIQSIGGKARVFREGITVIDVKASIDPIPTSIDESSSVVLRYRTPHFRASAQVVMPPIPKKETWIVGWIQACSHMEFYNQYGEQGMSSWELPDLQEGKIEAISDSDGVNYPWYGNTTETCTIVGPTKRDSKFIISMNDNFYPSVTWAVPVSESNVAKLTNIYRDQSFTTWLVATNTSTNDMIILQTLHWRMQLSIEVNPNRPLGQRARLREPIAQDQPKILSKNEPIPPSALVKPNANDAQVLMWRPKYGQPLVVIPPKHR</sequence>
<name>FA78A_MOUSE</name>
<accession>Q8C552</accession>
<feature type="chain" id="PRO_0000265113" description="Protein FAM78A">
    <location>
        <begin position="1"/>
        <end position="283"/>
    </location>
</feature>
<organism>
    <name type="scientific">Mus musculus</name>
    <name type="common">Mouse</name>
    <dbReference type="NCBI Taxonomy" id="10090"/>
    <lineage>
        <taxon>Eukaryota</taxon>
        <taxon>Metazoa</taxon>
        <taxon>Chordata</taxon>
        <taxon>Craniata</taxon>
        <taxon>Vertebrata</taxon>
        <taxon>Euteleostomi</taxon>
        <taxon>Mammalia</taxon>
        <taxon>Eutheria</taxon>
        <taxon>Euarchontoglires</taxon>
        <taxon>Glires</taxon>
        <taxon>Rodentia</taxon>
        <taxon>Myomorpha</taxon>
        <taxon>Muroidea</taxon>
        <taxon>Muridae</taxon>
        <taxon>Murinae</taxon>
        <taxon>Mus</taxon>
        <taxon>Mus</taxon>
    </lineage>
</organism>
<gene>
    <name type="primary">Fam78a</name>
</gene>
<comment type="similarity">
    <text evidence="1">Belongs to the FAM78 family.</text>
</comment>
<dbReference type="EMBL" id="AK079514">
    <property type="protein sequence ID" value="BAC37667.1"/>
    <property type="molecule type" value="mRNA"/>
</dbReference>
<dbReference type="EMBL" id="AK165375">
    <property type="protein sequence ID" value="BAE38152.1"/>
    <property type="molecule type" value="mRNA"/>
</dbReference>
<dbReference type="CCDS" id="CCDS15905.1"/>
<dbReference type="RefSeq" id="NP_001386390.1">
    <property type="nucleotide sequence ID" value="NM_001399461.1"/>
</dbReference>
<dbReference type="RefSeq" id="NP_780720.1">
    <property type="nucleotide sequence ID" value="NM_175511.5"/>
</dbReference>
<dbReference type="RefSeq" id="XP_011237398.1">
    <property type="nucleotide sequence ID" value="XM_011239096.2"/>
</dbReference>
<dbReference type="RefSeq" id="XP_011237400.1">
    <property type="nucleotide sequence ID" value="XM_011239098.2"/>
</dbReference>
<dbReference type="RefSeq" id="XP_011237401.1">
    <property type="nucleotide sequence ID" value="XM_011239099.1"/>
</dbReference>
<dbReference type="RefSeq" id="XP_011237402.1">
    <property type="nucleotide sequence ID" value="XM_011239100.2"/>
</dbReference>
<dbReference type="FunCoup" id="Q8C552">
    <property type="interactions" value="3"/>
</dbReference>
<dbReference type="STRING" id="10090.ENSMUSP00000052826"/>
<dbReference type="PhosphoSitePlus" id="Q8C552"/>
<dbReference type="SwissPalm" id="Q8C552"/>
<dbReference type="PaxDb" id="10090-ENSMUSP00000052826"/>
<dbReference type="ProteomicsDB" id="271848"/>
<dbReference type="Antibodypedia" id="18087">
    <property type="antibodies" value="112 antibodies from 19 providers"/>
</dbReference>
<dbReference type="Ensembl" id="ENSMUST00000056406.7">
    <property type="protein sequence ID" value="ENSMUSP00000052826.7"/>
    <property type="gene ID" value="ENSMUSG00000050592.9"/>
</dbReference>
<dbReference type="Ensembl" id="ENSMUST00000139629.2">
    <property type="protein sequence ID" value="ENSMUSP00000115010.2"/>
    <property type="gene ID" value="ENSMUSG00000050592.9"/>
</dbReference>
<dbReference type="GeneID" id="241303"/>
<dbReference type="KEGG" id="mmu:241303"/>
<dbReference type="UCSC" id="uc008jek.1">
    <property type="organism name" value="mouse"/>
</dbReference>
<dbReference type="AGR" id="MGI:2443569"/>
<dbReference type="CTD" id="286336"/>
<dbReference type="MGI" id="MGI:2443569">
    <property type="gene designation" value="Fam78a"/>
</dbReference>
<dbReference type="VEuPathDB" id="HostDB:ENSMUSG00000050592"/>
<dbReference type="eggNOG" id="ENOG502QPXK">
    <property type="taxonomic scope" value="Eukaryota"/>
</dbReference>
<dbReference type="GeneTree" id="ENSGT00390000018059"/>
<dbReference type="HOGENOM" id="CLU_085745_0_0_1"/>
<dbReference type="InParanoid" id="Q8C552"/>
<dbReference type="OMA" id="QTLRWRM"/>
<dbReference type="OrthoDB" id="9971204at2759"/>
<dbReference type="PhylomeDB" id="Q8C552"/>
<dbReference type="TreeFam" id="TF329533"/>
<dbReference type="BioGRID-ORCS" id="241303">
    <property type="hits" value="1 hit in 77 CRISPR screens"/>
</dbReference>
<dbReference type="ChiTaRS" id="Fam78a">
    <property type="organism name" value="mouse"/>
</dbReference>
<dbReference type="PRO" id="PR:Q8C552"/>
<dbReference type="Proteomes" id="UP000000589">
    <property type="component" value="Chromosome 2"/>
</dbReference>
<dbReference type="RNAct" id="Q8C552">
    <property type="molecule type" value="protein"/>
</dbReference>
<dbReference type="Bgee" id="ENSMUSG00000050592">
    <property type="expression patterns" value="Expressed in interventricular septum and 147 other cell types or tissues"/>
</dbReference>
<dbReference type="ExpressionAtlas" id="Q8C552">
    <property type="expression patterns" value="baseline and differential"/>
</dbReference>
<dbReference type="InterPro" id="IPR029638">
    <property type="entry name" value="FAM78"/>
</dbReference>
<dbReference type="PANTHER" id="PTHR31655">
    <property type="entry name" value="PROTEIN FAM78A"/>
    <property type="match status" value="1"/>
</dbReference>
<dbReference type="PANTHER" id="PTHR31655:SF3">
    <property type="entry name" value="PROTEIN FAM78A"/>
    <property type="match status" value="1"/>
</dbReference>
<reference key="1">
    <citation type="journal article" date="2005" name="Science">
        <title>The transcriptional landscape of the mammalian genome.</title>
        <authorList>
            <person name="Carninci P."/>
            <person name="Kasukawa T."/>
            <person name="Katayama S."/>
            <person name="Gough J."/>
            <person name="Frith M.C."/>
            <person name="Maeda N."/>
            <person name="Oyama R."/>
            <person name="Ravasi T."/>
            <person name="Lenhard B."/>
            <person name="Wells C."/>
            <person name="Kodzius R."/>
            <person name="Shimokawa K."/>
            <person name="Bajic V.B."/>
            <person name="Brenner S.E."/>
            <person name="Batalov S."/>
            <person name="Forrest A.R."/>
            <person name="Zavolan M."/>
            <person name="Davis M.J."/>
            <person name="Wilming L.G."/>
            <person name="Aidinis V."/>
            <person name="Allen J.E."/>
            <person name="Ambesi-Impiombato A."/>
            <person name="Apweiler R."/>
            <person name="Aturaliya R.N."/>
            <person name="Bailey T.L."/>
            <person name="Bansal M."/>
            <person name="Baxter L."/>
            <person name="Beisel K.W."/>
            <person name="Bersano T."/>
            <person name="Bono H."/>
            <person name="Chalk A.M."/>
            <person name="Chiu K.P."/>
            <person name="Choudhary V."/>
            <person name="Christoffels A."/>
            <person name="Clutterbuck D.R."/>
            <person name="Crowe M.L."/>
            <person name="Dalla E."/>
            <person name="Dalrymple B.P."/>
            <person name="de Bono B."/>
            <person name="Della Gatta G."/>
            <person name="di Bernardo D."/>
            <person name="Down T."/>
            <person name="Engstrom P."/>
            <person name="Fagiolini M."/>
            <person name="Faulkner G."/>
            <person name="Fletcher C.F."/>
            <person name="Fukushima T."/>
            <person name="Furuno M."/>
            <person name="Futaki S."/>
            <person name="Gariboldi M."/>
            <person name="Georgii-Hemming P."/>
            <person name="Gingeras T.R."/>
            <person name="Gojobori T."/>
            <person name="Green R.E."/>
            <person name="Gustincich S."/>
            <person name="Harbers M."/>
            <person name="Hayashi Y."/>
            <person name="Hensch T.K."/>
            <person name="Hirokawa N."/>
            <person name="Hill D."/>
            <person name="Huminiecki L."/>
            <person name="Iacono M."/>
            <person name="Ikeo K."/>
            <person name="Iwama A."/>
            <person name="Ishikawa T."/>
            <person name="Jakt M."/>
            <person name="Kanapin A."/>
            <person name="Katoh M."/>
            <person name="Kawasawa Y."/>
            <person name="Kelso J."/>
            <person name="Kitamura H."/>
            <person name="Kitano H."/>
            <person name="Kollias G."/>
            <person name="Krishnan S.P."/>
            <person name="Kruger A."/>
            <person name="Kummerfeld S.K."/>
            <person name="Kurochkin I.V."/>
            <person name="Lareau L.F."/>
            <person name="Lazarevic D."/>
            <person name="Lipovich L."/>
            <person name="Liu J."/>
            <person name="Liuni S."/>
            <person name="McWilliam S."/>
            <person name="Madan Babu M."/>
            <person name="Madera M."/>
            <person name="Marchionni L."/>
            <person name="Matsuda H."/>
            <person name="Matsuzawa S."/>
            <person name="Miki H."/>
            <person name="Mignone F."/>
            <person name="Miyake S."/>
            <person name="Morris K."/>
            <person name="Mottagui-Tabar S."/>
            <person name="Mulder N."/>
            <person name="Nakano N."/>
            <person name="Nakauchi H."/>
            <person name="Ng P."/>
            <person name="Nilsson R."/>
            <person name="Nishiguchi S."/>
            <person name="Nishikawa S."/>
            <person name="Nori F."/>
            <person name="Ohara O."/>
            <person name="Okazaki Y."/>
            <person name="Orlando V."/>
            <person name="Pang K.C."/>
            <person name="Pavan W.J."/>
            <person name="Pavesi G."/>
            <person name="Pesole G."/>
            <person name="Petrovsky N."/>
            <person name="Piazza S."/>
            <person name="Reed J."/>
            <person name="Reid J.F."/>
            <person name="Ring B.Z."/>
            <person name="Ringwald M."/>
            <person name="Rost B."/>
            <person name="Ruan Y."/>
            <person name="Salzberg S.L."/>
            <person name="Sandelin A."/>
            <person name="Schneider C."/>
            <person name="Schoenbach C."/>
            <person name="Sekiguchi K."/>
            <person name="Semple C.A."/>
            <person name="Seno S."/>
            <person name="Sessa L."/>
            <person name="Sheng Y."/>
            <person name="Shibata Y."/>
            <person name="Shimada H."/>
            <person name="Shimada K."/>
            <person name="Silva D."/>
            <person name="Sinclair B."/>
            <person name="Sperling S."/>
            <person name="Stupka E."/>
            <person name="Sugiura K."/>
            <person name="Sultana R."/>
            <person name="Takenaka Y."/>
            <person name="Taki K."/>
            <person name="Tammoja K."/>
            <person name="Tan S.L."/>
            <person name="Tang S."/>
            <person name="Taylor M.S."/>
            <person name="Tegner J."/>
            <person name="Teichmann S.A."/>
            <person name="Ueda H.R."/>
            <person name="van Nimwegen E."/>
            <person name="Verardo R."/>
            <person name="Wei C.L."/>
            <person name="Yagi K."/>
            <person name="Yamanishi H."/>
            <person name="Zabarovsky E."/>
            <person name="Zhu S."/>
            <person name="Zimmer A."/>
            <person name="Hide W."/>
            <person name="Bult C."/>
            <person name="Grimmond S.M."/>
            <person name="Teasdale R.D."/>
            <person name="Liu E.T."/>
            <person name="Brusic V."/>
            <person name="Quackenbush J."/>
            <person name="Wahlestedt C."/>
            <person name="Mattick J.S."/>
            <person name="Hume D.A."/>
            <person name="Kai C."/>
            <person name="Sasaki D."/>
            <person name="Tomaru Y."/>
            <person name="Fukuda S."/>
            <person name="Kanamori-Katayama M."/>
            <person name="Suzuki M."/>
            <person name="Aoki J."/>
            <person name="Arakawa T."/>
            <person name="Iida J."/>
            <person name="Imamura K."/>
            <person name="Itoh M."/>
            <person name="Kato T."/>
            <person name="Kawaji H."/>
            <person name="Kawagashira N."/>
            <person name="Kawashima T."/>
            <person name="Kojima M."/>
            <person name="Kondo S."/>
            <person name="Konno H."/>
            <person name="Nakano K."/>
            <person name="Ninomiya N."/>
            <person name="Nishio T."/>
            <person name="Okada M."/>
            <person name="Plessy C."/>
            <person name="Shibata K."/>
            <person name="Shiraki T."/>
            <person name="Suzuki S."/>
            <person name="Tagami M."/>
            <person name="Waki K."/>
            <person name="Watahiki A."/>
            <person name="Okamura-Oho Y."/>
            <person name="Suzuki H."/>
            <person name="Kawai J."/>
            <person name="Hayashizaki Y."/>
        </authorList>
    </citation>
    <scope>NUCLEOTIDE SEQUENCE [LARGE SCALE MRNA]</scope>
    <source>
        <strain>C57BL/6J</strain>
        <tissue>Spleen</tissue>
        <tissue>Thymus</tissue>
    </source>
</reference>
<reference key="2">
    <citation type="journal article" date="2010" name="Cell">
        <title>A tissue-specific atlas of mouse protein phosphorylation and expression.</title>
        <authorList>
            <person name="Huttlin E.L."/>
            <person name="Jedrychowski M.P."/>
            <person name="Elias J.E."/>
            <person name="Goswami T."/>
            <person name="Rad R."/>
            <person name="Beausoleil S.A."/>
            <person name="Villen J."/>
            <person name="Haas W."/>
            <person name="Sowa M.E."/>
            <person name="Gygi S.P."/>
        </authorList>
    </citation>
    <scope>IDENTIFICATION BY MASS SPECTROMETRY [LARGE SCALE ANALYSIS]</scope>
    <source>
        <tissue>Testis</tissue>
    </source>
</reference>